<name>MON1A_CHICK</name>
<keyword id="KW-1185">Reference proteome</keyword>
<reference key="1">
    <citation type="journal article" date="2005" name="Genome Biol.">
        <title>Full-length cDNAs from chicken bursal lymphocytes to facilitate gene function analysis.</title>
        <authorList>
            <person name="Caldwell R.B."/>
            <person name="Kierzek A.M."/>
            <person name="Arakawa H."/>
            <person name="Bezzubov Y."/>
            <person name="Zaim J."/>
            <person name="Fiedler P."/>
            <person name="Kutter S."/>
            <person name="Blagodatski A."/>
            <person name="Kostovska D."/>
            <person name="Koter M."/>
            <person name="Plachy J."/>
            <person name="Carninci P."/>
            <person name="Hayashizaki Y."/>
            <person name="Buerstedde J.-M."/>
        </authorList>
    </citation>
    <scope>NUCLEOTIDE SEQUENCE [LARGE SCALE MRNA]</scope>
    <source>
        <strain>CB</strain>
        <tissue>Bursa of Fabricius</tissue>
    </source>
</reference>
<comment type="function">
    <text evidence="1">Plays an important role in membrane trafficking through the secretory apparatus. Not involved in endocytic trafficking to lysosomes.</text>
</comment>
<comment type="similarity">
    <text evidence="3">Belongs to the MON1/SAND family.</text>
</comment>
<proteinExistence type="evidence at transcript level"/>
<dbReference type="EMBL" id="AJ720812">
    <property type="protein sequence ID" value="CAG32471.1"/>
    <property type="molecule type" value="mRNA"/>
</dbReference>
<dbReference type="RefSeq" id="NP_001025758.1">
    <property type="nucleotide sequence ID" value="NM_001030587.2"/>
</dbReference>
<dbReference type="SMR" id="Q5ZIH2"/>
<dbReference type="FunCoup" id="Q5ZIH2">
    <property type="interactions" value="1361"/>
</dbReference>
<dbReference type="STRING" id="9031.ENSGALP00000073591"/>
<dbReference type="GlyGen" id="Q5ZIH2">
    <property type="glycosylation" value="1 site"/>
</dbReference>
<dbReference type="PaxDb" id="9031-ENSGALP00000004599"/>
<dbReference type="GeneID" id="415929"/>
<dbReference type="KEGG" id="gga:415929"/>
<dbReference type="CTD" id="84315"/>
<dbReference type="VEuPathDB" id="HostDB:geneid_415929"/>
<dbReference type="eggNOG" id="KOG0997">
    <property type="taxonomic scope" value="Eukaryota"/>
</dbReference>
<dbReference type="InParanoid" id="Q5ZIH2"/>
<dbReference type="OrthoDB" id="272411at2759"/>
<dbReference type="PhylomeDB" id="Q5ZIH2"/>
<dbReference type="PRO" id="PR:Q5ZIH2"/>
<dbReference type="Proteomes" id="UP000000539">
    <property type="component" value="Unassembled WGS sequence"/>
</dbReference>
<dbReference type="GO" id="GO:0035658">
    <property type="term" value="C:Mon1-Ccz1 complex"/>
    <property type="evidence" value="ECO:0000318"/>
    <property type="project" value="GO_Central"/>
</dbReference>
<dbReference type="GO" id="GO:0005085">
    <property type="term" value="F:guanyl-nucleotide exchange factor activity"/>
    <property type="evidence" value="ECO:0000250"/>
    <property type="project" value="UniProtKB"/>
</dbReference>
<dbReference type="GO" id="GO:0009306">
    <property type="term" value="P:protein secretion"/>
    <property type="evidence" value="ECO:0000318"/>
    <property type="project" value="GO_Central"/>
</dbReference>
<dbReference type="GO" id="GO:0006623">
    <property type="term" value="P:protein targeting to vacuole"/>
    <property type="evidence" value="ECO:0007669"/>
    <property type="project" value="InterPro"/>
</dbReference>
<dbReference type="GO" id="GO:0016192">
    <property type="term" value="P:vesicle-mediated transport"/>
    <property type="evidence" value="ECO:0007669"/>
    <property type="project" value="InterPro"/>
</dbReference>
<dbReference type="InterPro" id="IPR043972">
    <property type="entry name" value="FUZ/MON1/HPS1_longin_1"/>
</dbReference>
<dbReference type="InterPro" id="IPR043971">
    <property type="entry name" value="FUZ/MON1/HPS1_longin_2"/>
</dbReference>
<dbReference type="InterPro" id="IPR043970">
    <property type="entry name" value="FUZ/MON1/HPS1_longin_3"/>
</dbReference>
<dbReference type="InterPro" id="IPR004353">
    <property type="entry name" value="Mon1"/>
</dbReference>
<dbReference type="PANTHER" id="PTHR13027">
    <property type="entry name" value="SAND PROTEIN-RELATED"/>
    <property type="match status" value="1"/>
</dbReference>
<dbReference type="PANTHER" id="PTHR13027:SF14">
    <property type="entry name" value="VACUOLAR FUSION PROTEIN MON1 HOMOLOG A"/>
    <property type="match status" value="1"/>
</dbReference>
<dbReference type="Pfam" id="PF19036">
    <property type="entry name" value="Fuz_longin_1"/>
    <property type="match status" value="1"/>
</dbReference>
<dbReference type="Pfam" id="PF19037">
    <property type="entry name" value="Fuz_longin_2"/>
    <property type="match status" value="1"/>
</dbReference>
<dbReference type="Pfam" id="PF19038">
    <property type="entry name" value="Fuz_longin_3"/>
    <property type="match status" value="1"/>
</dbReference>
<dbReference type="PRINTS" id="PR01546">
    <property type="entry name" value="YEAST73DUF"/>
</dbReference>
<sequence>MAADVHKKKGWEVPNGSLAPGDGQHAERSESPTPGLAQGTEPGAGQEGAMFVHTRSYEDLTSPEDGGAVVRSPEERRGEPAEPTSMEQISKDFSELSTQLTGMALDLEEEMRQSQEGKLEPSPQATRHDSVLSGKEEEDVTMDTWRMHRKHVFVLSEAGKPVYSRYGSEEALSSTMGVMMALVSFLEAEKNAIRSIHADGYKVVFVRRSPLVLVAVARTRQSEQEIAHELLYIYYQILSLLTWTQLNHIFQQKQNYDLRRLLAGSERITDNLLDLMAHDPSFLMGAVRCLPLAASVRDAVSTSLQQAKAKSLVFSILLSGNQLVSLVRKKDQFLHPIDLHLLFNLISSSSSFREGEAWTPICLPKFNSSGFFHAHISYLEQEMDLCLLLVSTDREDFFTVSDCKRRFQERLRRRGVHHALQEALRTPFYSVAQVGIPDLRHFIYKSKSSGLFTSPEIEAPYVREEEKERLLGLYQYLHSRAHNSSCPLKNIYFTGPRENLLAWVTSAFELYICYSPLGTKAGAISAVNKLMKWIRKEEDRLFILTPQTY</sequence>
<organism>
    <name type="scientific">Gallus gallus</name>
    <name type="common">Chicken</name>
    <dbReference type="NCBI Taxonomy" id="9031"/>
    <lineage>
        <taxon>Eukaryota</taxon>
        <taxon>Metazoa</taxon>
        <taxon>Chordata</taxon>
        <taxon>Craniata</taxon>
        <taxon>Vertebrata</taxon>
        <taxon>Euteleostomi</taxon>
        <taxon>Archelosauria</taxon>
        <taxon>Archosauria</taxon>
        <taxon>Dinosauria</taxon>
        <taxon>Saurischia</taxon>
        <taxon>Theropoda</taxon>
        <taxon>Coelurosauria</taxon>
        <taxon>Aves</taxon>
        <taxon>Neognathae</taxon>
        <taxon>Galloanserae</taxon>
        <taxon>Galliformes</taxon>
        <taxon>Phasianidae</taxon>
        <taxon>Phasianinae</taxon>
        <taxon>Gallus</taxon>
    </lineage>
</organism>
<evidence type="ECO:0000250" key="1">
    <source>
        <dbReference type="UniProtKB" id="Q6PDG8"/>
    </source>
</evidence>
<evidence type="ECO:0000256" key="2">
    <source>
        <dbReference type="SAM" id="MobiDB-lite"/>
    </source>
</evidence>
<evidence type="ECO:0000305" key="3"/>
<accession>Q5ZIH2</accession>
<gene>
    <name type="primary">MON1A</name>
    <name type="ORF">RCJMB04_26e14</name>
</gene>
<protein>
    <recommendedName>
        <fullName>Vacuolar fusion protein MON1 homolog A</fullName>
    </recommendedName>
</protein>
<feature type="chain" id="PRO_0000285764" description="Vacuolar fusion protein MON1 homolog A">
    <location>
        <begin position="1"/>
        <end position="549"/>
    </location>
</feature>
<feature type="region of interest" description="Disordered" evidence="2">
    <location>
        <begin position="1"/>
        <end position="90"/>
    </location>
</feature>
<feature type="region of interest" description="Disordered" evidence="2">
    <location>
        <begin position="109"/>
        <end position="137"/>
    </location>
</feature>
<feature type="compositionally biased region" description="Basic and acidic residues" evidence="2">
    <location>
        <begin position="110"/>
        <end position="119"/>
    </location>
</feature>